<dbReference type="EMBL" id="AE014075">
    <property type="protein sequence ID" value="AAN80740.1"/>
    <property type="status" value="ALT_INIT"/>
    <property type="molecule type" value="Genomic_DNA"/>
</dbReference>
<dbReference type="RefSeq" id="WP_000252980.1">
    <property type="nucleotide sequence ID" value="NZ_CP051263.1"/>
</dbReference>
<dbReference type="SMR" id="P64516"/>
<dbReference type="STRING" id="199310.c2283"/>
<dbReference type="KEGG" id="ecc:c2283"/>
<dbReference type="eggNOG" id="COG3788">
    <property type="taxonomic scope" value="Bacteria"/>
</dbReference>
<dbReference type="HOGENOM" id="CLU_134926_1_0_6"/>
<dbReference type="Proteomes" id="UP000001410">
    <property type="component" value="Chromosome"/>
</dbReference>
<dbReference type="GO" id="GO:0005886">
    <property type="term" value="C:plasma membrane"/>
    <property type="evidence" value="ECO:0007669"/>
    <property type="project" value="UniProtKB-SubCell"/>
</dbReference>
<dbReference type="FunFam" id="1.20.120.550:FF:000001">
    <property type="entry name" value="Inner membrane protein yecN"/>
    <property type="match status" value="1"/>
</dbReference>
<dbReference type="Gene3D" id="1.20.120.550">
    <property type="entry name" value="Membrane associated eicosanoid/glutathione metabolism-like domain"/>
    <property type="match status" value="1"/>
</dbReference>
<dbReference type="InterPro" id="IPR023352">
    <property type="entry name" value="MAPEG-like_dom_sf"/>
</dbReference>
<dbReference type="InterPro" id="IPR001129">
    <property type="entry name" value="Membr-assoc_MAPEG"/>
</dbReference>
<dbReference type="PANTHER" id="PTHR35814">
    <property type="match status" value="1"/>
</dbReference>
<dbReference type="PANTHER" id="PTHR35814:SF1">
    <property type="entry name" value="GLUTATHIONE S-TRANSFERASE-RELATED"/>
    <property type="match status" value="1"/>
</dbReference>
<dbReference type="Pfam" id="PF01124">
    <property type="entry name" value="MAPEG"/>
    <property type="match status" value="1"/>
</dbReference>
<dbReference type="SUPFAM" id="SSF161084">
    <property type="entry name" value="MAPEG domain-like"/>
    <property type="match status" value="1"/>
</dbReference>
<accession>P64516</accession>
<accession>P76289</accession>
<reference key="1">
    <citation type="journal article" date="2002" name="Proc. Natl. Acad. Sci. U.S.A.">
        <title>Extensive mosaic structure revealed by the complete genome sequence of uropathogenic Escherichia coli.</title>
        <authorList>
            <person name="Welch R.A."/>
            <person name="Burland V."/>
            <person name="Plunkett G. III"/>
            <person name="Redford P."/>
            <person name="Roesch P."/>
            <person name="Rasko D."/>
            <person name="Buckles E.L."/>
            <person name="Liou S.-R."/>
            <person name="Boutin A."/>
            <person name="Hackett J."/>
            <person name="Stroud D."/>
            <person name="Mayhew G.F."/>
            <person name="Rose D.J."/>
            <person name="Zhou S."/>
            <person name="Schwartz D.C."/>
            <person name="Perna N.T."/>
            <person name="Mobley H.L.T."/>
            <person name="Donnenberg M.S."/>
            <person name="Blattner F.R."/>
        </authorList>
    </citation>
    <scope>NUCLEOTIDE SEQUENCE [LARGE SCALE GENOMIC DNA]</scope>
    <source>
        <strain>CFT073 / ATCC 700928 / UPEC</strain>
    </source>
</reference>
<keyword id="KW-0997">Cell inner membrane</keyword>
<keyword id="KW-1003">Cell membrane</keyword>
<keyword id="KW-0472">Membrane</keyword>
<keyword id="KW-1185">Reference proteome</keyword>
<keyword id="KW-0812">Transmembrane</keyword>
<keyword id="KW-1133">Transmembrane helix</keyword>
<sequence>MVSALYAVLSALLLMKFSFDVVRLRMQYRVAYGDGGFSELQSAIRIHGNAVEYIPIAIVLMLFMEMNGAETWMVHICGIVLLAGRLMHYYGFHHRLFRWRRSGMSATWCALLLMVLANLWYMPWELVFSLR</sequence>
<proteinExistence type="inferred from homology"/>
<comment type="subcellular location">
    <subcellularLocation>
        <location evidence="1">Cell inner membrane</location>
    </subcellularLocation>
</comment>
<comment type="sequence caution" evidence="3">
    <conflict type="erroneous initiation">
        <sequence resource="EMBL-CDS" id="AAN80740"/>
    </conflict>
</comment>
<protein>
    <recommendedName>
        <fullName>Inner membrane protein YecN</fullName>
    </recommendedName>
</protein>
<evidence type="ECO:0000250" key="1"/>
<evidence type="ECO:0000255" key="2"/>
<evidence type="ECO:0000305" key="3"/>
<organism>
    <name type="scientific">Escherichia coli O6:H1 (strain CFT073 / ATCC 700928 / UPEC)</name>
    <dbReference type="NCBI Taxonomy" id="199310"/>
    <lineage>
        <taxon>Bacteria</taxon>
        <taxon>Pseudomonadati</taxon>
        <taxon>Pseudomonadota</taxon>
        <taxon>Gammaproteobacteria</taxon>
        <taxon>Enterobacterales</taxon>
        <taxon>Enterobacteriaceae</taxon>
        <taxon>Escherichia</taxon>
    </lineage>
</organism>
<feature type="chain" id="PRO_0000169082" description="Inner membrane protein YecN">
    <location>
        <begin position="1"/>
        <end position="131"/>
    </location>
</feature>
<feature type="topological domain" description="Cytoplasmic" evidence="2">
    <location>
        <begin position="1"/>
        <end position="107"/>
    </location>
</feature>
<feature type="transmembrane region" description="Helical" evidence="2">
    <location>
        <begin position="108"/>
        <end position="128"/>
    </location>
</feature>
<feature type="topological domain" description="Periplasmic" evidence="2">
    <location>
        <begin position="129"/>
        <end position="131"/>
    </location>
</feature>
<name>YECN_ECOL6</name>
<gene>
    <name type="primary">yecN</name>
    <name type="ordered locus">c2283</name>
</gene>